<evidence type="ECO:0000255" key="1">
    <source>
        <dbReference type="HAMAP-Rule" id="MF_01039"/>
    </source>
</evidence>
<protein>
    <recommendedName>
        <fullName evidence="1">2,3-bisphosphoglycerate-dependent phosphoglycerate mutase</fullName>
        <shortName evidence="1">BPG-dependent PGAM</shortName>
        <shortName evidence="1">PGAM</shortName>
        <shortName evidence="1">Phosphoglyceromutase</shortName>
        <shortName evidence="1">dPGM</shortName>
        <ecNumber evidence="1">5.4.2.11</ecNumber>
    </recommendedName>
</protein>
<dbReference type="EC" id="5.4.2.11" evidence="1"/>
<dbReference type="EMBL" id="AE009948">
    <property type="protein sequence ID" value="AAM99651.1"/>
    <property type="molecule type" value="Genomic_DNA"/>
</dbReference>
<dbReference type="RefSeq" id="NP_687779.1">
    <property type="nucleotide sequence ID" value="NC_004116.1"/>
</dbReference>
<dbReference type="RefSeq" id="WP_000240135.1">
    <property type="nucleotide sequence ID" value="NC_004116.1"/>
</dbReference>
<dbReference type="SMR" id="Q8E0G9"/>
<dbReference type="STRING" id="208435.SAG0764"/>
<dbReference type="KEGG" id="sag:SAG0764"/>
<dbReference type="PATRIC" id="fig|208435.3.peg.771"/>
<dbReference type="HOGENOM" id="CLU_033323_1_5_9"/>
<dbReference type="OrthoDB" id="9781415at2"/>
<dbReference type="UniPathway" id="UPA00109">
    <property type="reaction ID" value="UER00186"/>
</dbReference>
<dbReference type="Proteomes" id="UP000000821">
    <property type="component" value="Chromosome"/>
</dbReference>
<dbReference type="GO" id="GO:0004619">
    <property type="term" value="F:phosphoglycerate mutase activity"/>
    <property type="evidence" value="ECO:0007669"/>
    <property type="project" value="UniProtKB-EC"/>
</dbReference>
<dbReference type="GO" id="GO:0006094">
    <property type="term" value="P:gluconeogenesis"/>
    <property type="evidence" value="ECO:0007669"/>
    <property type="project" value="UniProtKB-UniRule"/>
</dbReference>
<dbReference type="GO" id="GO:0006096">
    <property type="term" value="P:glycolytic process"/>
    <property type="evidence" value="ECO:0007669"/>
    <property type="project" value="UniProtKB-UniRule"/>
</dbReference>
<dbReference type="CDD" id="cd07067">
    <property type="entry name" value="HP_PGM_like"/>
    <property type="match status" value="1"/>
</dbReference>
<dbReference type="FunFam" id="3.40.50.1240:FF:000003">
    <property type="entry name" value="2,3-bisphosphoglycerate-dependent phosphoglycerate mutase"/>
    <property type="match status" value="1"/>
</dbReference>
<dbReference type="Gene3D" id="3.40.50.1240">
    <property type="entry name" value="Phosphoglycerate mutase-like"/>
    <property type="match status" value="1"/>
</dbReference>
<dbReference type="HAMAP" id="MF_01039">
    <property type="entry name" value="PGAM_GpmA"/>
    <property type="match status" value="1"/>
</dbReference>
<dbReference type="InterPro" id="IPR013078">
    <property type="entry name" value="His_Pase_superF_clade-1"/>
</dbReference>
<dbReference type="InterPro" id="IPR029033">
    <property type="entry name" value="His_PPase_superfam"/>
</dbReference>
<dbReference type="InterPro" id="IPR005952">
    <property type="entry name" value="Phosphogly_mut1"/>
</dbReference>
<dbReference type="NCBIfam" id="TIGR01258">
    <property type="entry name" value="pgm_1"/>
    <property type="match status" value="1"/>
</dbReference>
<dbReference type="NCBIfam" id="NF010713">
    <property type="entry name" value="PRK14115.1"/>
    <property type="match status" value="1"/>
</dbReference>
<dbReference type="NCBIfam" id="NF010715">
    <property type="entry name" value="PRK14117.1"/>
    <property type="match status" value="1"/>
</dbReference>
<dbReference type="PANTHER" id="PTHR11931">
    <property type="entry name" value="PHOSPHOGLYCERATE MUTASE"/>
    <property type="match status" value="1"/>
</dbReference>
<dbReference type="Pfam" id="PF00300">
    <property type="entry name" value="His_Phos_1"/>
    <property type="match status" value="1"/>
</dbReference>
<dbReference type="PIRSF" id="PIRSF000709">
    <property type="entry name" value="6PFK_2-Ptase"/>
    <property type="match status" value="1"/>
</dbReference>
<dbReference type="SMART" id="SM00855">
    <property type="entry name" value="PGAM"/>
    <property type="match status" value="1"/>
</dbReference>
<dbReference type="SUPFAM" id="SSF53254">
    <property type="entry name" value="Phosphoglycerate mutase-like"/>
    <property type="match status" value="1"/>
</dbReference>
<organism>
    <name type="scientific">Streptococcus agalactiae serotype V (strain ATCC BAA-611 / 2603 V/R)</name>
    <dbReference type="NCBI Taxonomy" id="208435"/>
    <lineage>
        <taxon>Bacteria</taxon>
        <taxon>Bacillati</taxon>
        <taxon>Bacillota</taxon>
        <taxon>Bacilli</taxon>
        <taxon>Lactobacillales</taxon>
        <taxon>Streptococcaceae</taxon>
        <taxon>Streptococcus</taxon>
    </lineage>
</organism>
<accession>Q8E0G9</accession>
<comment type="function">
    <text evidence="1">Catalyzes the interconversion of 2-phosphoglycerate and 3-phosphoglycerate.</text>
</comment>
<comment type="catalytic activity">
    <reaction evidence="1">
        <text>(2R)-2-phosphoglycerate = (2R)-3-phosphoglycerate</text>
        <dbReference type="Rhea" id="RHEA:15901"/>
        <dbReference type="ChEBI" id="CHEBI:58272"/>
        <dbReference type="ChEBI" id="CHEBI:58289"/>
        <dbReference type="EC" id="5.4.2.11"/>
    </reaction>
</comment>
<comment type="pathway">
    <text evidence="1">Carbohydrate degradation; glycolysis; pyruvate from D-glyceraldehyde 3-phosphate: step 3/5.</text>
</comment>
<comment type="similarity">
    <text evidence="1">Belongs to the phosphoglycerate mutase family. BPG-dependent PGAM subfamily.</text>
</comment>
<name>GPMA_STRA5</name>
<reference key="1">
    <citation type="journal article" date="2002" name="Proc. Natl. Acad. Sci. U.S.A.">
        <title>Complete genome sequence and comparative genomic analysis of an emerging human pathogen, serotype V Streptococcus agalactiae.</title>
        <authorList>
            <person name="Tettelin H."/>
            <person name="Masignani V."/>
            <person name="Cieslewicz M.J."/>
            <person name="Eisen J.A."/>
            <person name="Peterson S.N."/>
            <person name="Wessels M.R."/>
            <person name="Paulsen I.T."/>
            <person name="Nelson K.E."/>
            <person name="Margarit I."/>
            <person name="Read T.D."/>
            <person name="Madoff L.C."/>
            <person name="Wolf A.M."/>
            <person name="Beanan M.J."/>
            <person name="Brinkac L.M."/>
            <person name="Daugherty S.C."/>
            <person name="DeBoy R.T."/>
            <person name="Durkin A.S."/>
            <person name="Kolonay J.F."/>
            <person name="Madupu R."/>
            <person name="Lewis M.R."/>
            <person name="Radune D."/>
            <person name="Fedorova N.B."/>
            <person name="Scanlan D."/>
            <person name="Khouri H.M."/>
            <person name="Mulligan S."/>
            <person name="Carty H.A."/>
            <person name="Cline R.T."/>
            <person name="Van Aken S.E."/>
            <person name="Gill J."/>
            <person name="Scarselli M."/>
            <person name="Mora M."/>
            <person name="Iacobini E.T."/>
            <person name="Brettoni C."/>
            <person name="Galli G."/>
            <person name="Mariani M."/>
            <person name="Vegni F."/>
            <person name="Maione D."/>
            <person name="Rinaudo D."/>
            <person name="Rappuoli R."/>
            <person name="Telford J.L."/>
            <person name="Kasper D.L."/>
            <person name="Grandi G."/>
            <person name="Fraser C.M."/>
        </authorList>
    </citation>
    <scope>NUCLEOTIDE SEQUENCE [LARGE SCALE GENOMIC DNA]</scope>
    <source>
        <strain>ATCC BAA-611 / 2603 V/R</strain>
    </source>
</reference>
<gene>
    <name evidence="1" type="primary">gpmA</name>
    <name type="ordered locus">SAG0764</name>
</gene>
<sequence>MVKLVFARHGESEWNKANLFTGWADVDLSEKGTQQAIDAGKLIQAAGIEFDLAFTSVLKRAIKTTNLALEAADQLWVPVEKSWRLNERHYGGLTGKNKAEAAEQFGDEQVHIWRRSYDVLPPDMAKDDEHSAHTDRRYASLDDSVIPDAENLKVTLERALPFWEDKIAPALKDGKNVFVGAHGNSIRALVKHIKQLSDDEIMDVEIPNFPPLVFEFDEKLNLVSEYYLGK</sequence>
<keyword id="KW-0312">Gluconeogenesis</keyword>
<keyword id="KW-0324">Glycolysis</keyword>
<keyword id="KW-0413">Isomerase</keyword>
<keyword id="KW-1185">Reference proteome</keyword>
<feature type="chain" id="PRO_0000179921" description="2,3-bisphosphoglycerate-dependent phosphoglycerate mutase">
    <location>
        <begin position="1"/>
        <end position="230"/>
    </location>
</feature>
<feature type="active site" description="Tele-phosphohistidine intermediate" evidence="1">
    <location>
        <position position="9"/>
    </location>
</feature>
<feature type="active site" description="Proton donor/acceptor" evidence="1">
    <location>
        <position position="87"/>
    </location>
</feature>
<feature type="binding site" evidence="1">
    <location>
        <begin position="8"/>
        <end position="15"/>
    </location>
    <ligand>
        <name>substrate</name>
    </ligand>
</feature>
<feature type="binding site" evidence="1">
    <location>
        <begin position="21"/>
        <end position="22"/>
    </location>
    <ligand>
        <name>substrate</name>
    </ligand>
</feature>
<feature type="binding site" evidence="1">
    <location>
        <position position="60"/>
    </location>
    <ligand>
        <name>substrate</name>
    </ligand>
</feature>
<feature type="binding site" evidence="1">
    <location>
        <begin position="87"/>
        <end position="90"/>
    </location>
    <ligand>
        <name>substrate</name>
    </ligand>
</feature>
<feature type="binding site" evidence="1">
    <location>
        <position position="98"/>
    </location>
    <ligand>
        <name>substrate</name>
    </ligand>
</feature>
<feature type="binding site" evidence="1">
    <location>
        <begin position="114"/>
        <end position="115"/>
    </location>
    <ligand>
        <name>substrate</name>
    </ligand>
</feature>
<feature type="binding site" evidence="1">
    <location>
        <begin position="183"/>
        <end position="184"/>
    </location>
    <ligand>
        <name>substrate</name>
    </ligand>
</feature>
<feature type="site" description="Transition state stabilizer" evidence="1">
    <location>
        <position position="182"/>
    </location>
</feature>
<proteinExistence type="inferred from homology"/>